<reference key="1">
    <citation type="journal article" date="2001" name="Nature">
        <title>Genome sequence of enterohaemorrhagic Escherichia coli O157:H7.</title>
        <authorList>
            <person name="Perna N.T."/>
            <person name="Plunkett G. III"/>
            <person name="Burland V."/>
            <person name="Mau B."/>
            <person name="Glasner J.D."/>
            <person name="Rose D.J."/>
            <person name="Mayhew G.F."/>
            <person name="Evans P.S."/>
            <person name="Gregor J."/>
            <person name="Kirkpatrick H.A."/>
            <person name="Posfai G."/>
            <person name="Hackett J."/>
            <person name="Klink S."/>
            <person name="Boutin A."/>
            <person name="Shao Y."/>
            <person name="Miller L."/>
            <person name="Grotbeck E.J."/>
            <person name="Davis N.W."/>
            <person name="Lim A."/>
            <person name="Dimalanta E.T."/>
            <person name="Potamousis K."/>
            <person name="Apodaca J."/>
            <person name="Anantharaman T.S."/>
            <person name="Lin J."/>
            <person name="Yen G."/>
            <person name="Schwartz D.C."/>
            <person name="Welch R.A."/>
            <person name="Blattner F.R."/>
        </authorList>
    </citation>
    <scope>NUCLEOTIDE SEQUENCE [LARGE SCALE GENOMIC DNA]</scope>
    <source>
        <strain>O157:H7 / EDL933 / ATCC 700927 / EHEC</strain>
    </source>
</reference>
<reference key="2">
    <citation type="journal article" date="2001" name="DNA Res.">
        <title>Complete genome sequence of enterohemorrhagic Escherichia coli O157:H7 and genomic comparison with a laboratory strain K-12.</title>
        <authorList>
            <person name="Hayashi T."/>
            <person name="Makino K."/>
            <person name="Ohnishi M."/>
            <person name="Kurokawa K."/>
            <person name="Ishii K."/>
            <person name="Yokoyama K."/>
            <person name="Han C.-G."/>
            <person name="Ohtsubo E."/>
            <person name="Nakayama K."/>
            <person name="Murata T."/>
            <person name="Tanaka M."/>
            <person name="Tobe T."/>
            <person name="Iida T."/>
            <person name="Takami H."/>
            <person name="Honda T."/>
            <person name="Sasakawa C."/>
            <person name="Ogasawara N."/>
            <person name="Yasunaga T."/>
            <person name="Kuhara S."/>
            <person name="Shiba T."/>
            <person name="Hattori M."/>
            <person name="Shinagawa H."/>
        </authorList>
    </citation>
    <scope>NUCLEOTIDE SEQUENCE [LARGE SCALE GENOMIC DNA]</scope>
    <source>
        <strain>O157:H7 / Sakai / RIMD 0509952 / EHEC</strain>
    </source>
</reference>
<reference key="3">
    <citation type="journal article" date="2017" name="Mol. Cell">
        <title>Programmed ribosomal frameshifting generates a copper transporter and a copper chaperone from the same gene.</title>
        <authorList>
            <person name="Meydan S."/>
            <person name="Klepacki D."/>
            <person name="Karthikeyan S."/>
            <person name="Margus T."/>
            <person name="Thomas P."/>
            <person name="Jones J.E."/>
            <person name="Khan Y."/>
            <person name="Briggs J."/>
            <person name="Dinman J.D."/>
            <person name="Vazquez-Laslop N."/>
            <person name="Mankin A.S."/>
        </authorList>
    </citation>
    <scope>POSSIBLE RIBOSOMAL FRAMESHIFT TO TRANSLATE ISOFORM SOLUBLE COPPER CHAPERONE COPA(Z)</scope>
</reference>
<sequence>MSQTIDLTLDGLSCGHCVKRVKESLEQRPDVEQADVSITEAHVTGTASAEQLIETIKQAGYDASVSHPKAKPLAESSIPSEALTAVSEALPAATADDDDSQQLLLSGMSCASCVTRVQNALQSVPGVTQARVNLAERTALVMGSASPQDLVQAVEKAGYGAEAIEDDAKRRERQQETAVATMKRFRWQAIVALAVGIPVMVWGMIGDNMMVTADNRSLWLVIGLITLAVMVFAGGHFYRSAWKSLLNGAATMDTLVALGTGVAWLYSMSVNLWPQWFPMEARHLYYEASAMIIGLINLGHMLEARARQRSSKALEKLLDLTPPTARLVTDEGEKSVPLAEVQPGMLLRLTTGDRVPVDGEITQGEAWLDEAMLTGEPIPQQKGEGDSVHAGTVVQDGSVLFRASAVGSHTTLSRIIRMVRQAQSSKPEIGQLADKISAVFVPVVVVIALVSAAIWYFFGPAPQIVYTLVIATTVLIIACPCALGLATPMSIISGVGRAAEFGVLVRDADALQRASTLDTVVFDKTGTLTEGKPQVVAVKTFADFDEAQALRLAAALEQGSSHPLARAILDKASDMQLPQVNGFRTLRGLGVSGEAEGHALLLGNQALLNDQQVDTKAIEADISAQASQGATPVLLAVDGKAVALLAVRDPLRSDSVAALQRLHKAGYRLVMLTGDNPTTANAIAKEAGIDEVIAGVLPDGKAEAIKRLQSEGRQVAMVGDGINDAPALAQADVGIAMGGGSDVAIETAAITLMRHSLMGVADALAISRATLRNMKQNLLGAFIYNSIGIPVAAGILWPFTGTLLNPVVAGAAMALSSITVVSNANRLLRFKPKE</sequence>
<organism>
    <name type="scientific">Escherichia coli O157:H7</name>
    <dbReference type="NCBI Taxonomy" id="83334"/>
    <lineage>
        <taxon>Bacteria</taxon>
        <taxon>Pseudomonadati</taxon>
        <taxon>Pseudomonadota</taxon>
        <taxon>Gammaproteobacteria</taxon>
        <taxon>Enterobacterales</taxon>
        <taxon>Enterobacteriaceae</taxon>
        <taxon>Escherichia</taxon>
    </lineage>
</organism>
<name>COPA_ECO57</name>
<comment type="function">
    <molecule>Copper-exporting P-type ATPase</molecule>
    <text evidence="2">Involved in Cu(+) export (By similarity).</text>
</comment>
<comment type="function">
    <molecule>Isoform Soluble copper chaperone CopA(Z)</molecule>
    <text evidence="2 6">Probably also encodes a cytoplasmic copper chaperone CopA(Z) that is produced by programmed ribosomal frameshifting (Probable).</text>
</comment>
<comment type="catalytic activity">
    <reaction>
        <text>Cu(+)(in) + ATP + H2O = Cu(+)(out) + ADP + phosphate + H(+)</text>
        <dbReference type="Rhea" id="RHEA:25792"/>
        <dbReference type="ChEBI" id="CHEBI:15377"/>
        <dbReference type="ChEBI" id="CHEBI:15378"/>
        <dbReference type="ChEBI" id="CHEBI:30616"/>
        <dbReference type="ChEBI" id="CHEBI:43474"/>
        <dbReference type="ChEBI" id="CHEBI:49552"/>
        <dbReference type="ChEBI" id="CHEBI:456216"/>
        <dbReference type="EC" id="7.2.2.8"/>
    </reaction>
</comment>
<comment type="subcellular location">
    <molecule>Copper-exporting P-type ATPase</molecule>
    <subcellularLocation>
        <location evidence="2">Cell inner membrane</location>
        <topology evidence="2">Multi-pass membrane protein</topology>
    </subcellularLocation>
</comment>
<comment type="subcellular location">
    <molecule>Isoform Soluble copper chaperone CopA(Z)</molecule>
    <subcellularLocation>
        <location evidence="2">Cytoplasm</location>
    </subcellularLocation>
</comment>
<comment type="alternative products">
    <event type="ribosomal frameshifting"/>
    <isoform>
        <id>Q8XD24-1</id>
        <name>Copper-exporting P-type ATPase A</name>
        <sequence type="displayed"/>
    </isoform>
    <isoform>
        <id>Q8XD24-2</id>
        <name>Soluble copper chaperone CopA(Z)</name>
        <sequence type="described" ref="VSP_059177"/>
    </isoform>
</comment>
<comment type="miscellaneous">
    <molecule>Isoform Soluble copper chaperone CopA(Z)</molecule>
    <text evidence="2 6">Expression of the CopA(Z) soluble copper chaperone isoform requires a -1 programmed ribosomal frameshift (PRF) at the 70th codon. A nucleotide 'slippery sequence' that promotes PRF is found just downstream of the frameshifted site.</text>
</comment>
<comment type="similarity">
    <text evidence="5">Belongs to the cation transport ATPase (P-type) (TC 3.A.3) family. Type IB subfamily.</text>
</comment>
<protein>
    <recommendedName>
        <fullName>Copper-exporting P-type ATPase</fullName>
        <ecNumber>7.2.2.8</ecNumber>
    </recommendedName>
    <alternativeName>
        <fullName>Copper-exporting P-type ATPase A</fullName>
    </alternativeName>
    <alternativeName>
        <fullName>Cu(+)-exporting ATPase</fullName>
    </alternativeName>
    <alternativeName>
        <fullName evidence="2">Soluble copper chaperone CopA(Z)</fullName>
    </alternativeName>
</protein>
<accession>Q8XD24</accession>
<feature type="initiator methionine" description="Removed" evidence="1">
    <location>
        <position position="1"/>
    </location>
</feature>
<feature type="chain" id="PRO_0000046321" description="Copper-exporting P-type ATPase">
    <location>
        <begin position="2"/>
        <end position="834"/>
    </location>
</feature>
<feature type="transmembrane region" description="Helical" evidence="3">
    <location>
        <begin position="187"/>
        <end position="207"/>
    </location>
</feature>
<feature type="transmembrane region" description="Helical" evidence="3">
    <location>
        <begin position="218"/>
        <end position="238"/>
    </location>
</feature>
<feature type="transmembrane region" description="Helical" evidence="3">
    <location>
        <begin position="254"/>
        <end position="274"/>
    </location>
</feature>
<feature type="transmembrane region" description="Helical" evidence="3">
    <location>
        <begin position="284"/>
        <end position="304"/>
    </location>
</feature>
<feature type="transmembrane region" description="Helical" evidence="3">
    <location>
        <begin position="438"/>
        <end position="458"/>
    </location>
</feature>
<feature type="transmembrane region" description="Helical" evidence="3">
    <location>
        <begin position="464"/>
        <end position="484"/>
    </location>
</feature>
<feature type="transmembrane region" description="Helical" evidence="3">
    <location>
        <begin position="779"/>
        <end position="799"/>
    </location>
</feature>
<feature type="transmembrane region" description="Helical" evidence="3">
    <location>
        <begin position="801"/>
        <end position="821"/>
    </location>
</feature>
<feature type="domain" description="HMA 1" evidence="4">
    <location>
        <begin position="3"/>
        <end position="64"/>
    </location>
</feature>
<feature type="domain" description="HMA 2" evidence="4">
    <location>
        <begin position="99"/>
        <end position="162"/>
    </location>
</feature>
<feature type="active site" description="4-aspartylphosphate intermediate" evidence="5">
    <location>
        <position position="523"/>
    </location>
</feature>
<feature type="binding site" evidence="4">
    <location>
        <position position="14"/>
    </location>
    <ligand>
        <name>Cu(+)</name>
        <dbReference type="ChEBI" id="CHEBI:49552"/>
        <label>1</label>
    </ligand>
</feature>
<feature type="binding site" evidence="4">
    <location>
        <position position="17"/>
    </location>
    <ligand>
        <name>Cu(+)</name>
        <dbReference type="ChEBI" id="CHEBI:49552"/>
        <label>1</label>
    </ligand>
</feature>
<feature type="binding site" evidence="4">
    <location>
        <position position="110"/>
    </location>
    <ligand>
        <name>Cu(+)</name>
        <dbReference type="ChEBI" id="CHEBI:49552"/>
        <label>2</label>
    </ligand>
</feature>
<feature type="binding site" evidence="4">
    <location>
        <position position="113"/>
    </location>
    <ligand>
        <name>Cu(+)</name>
        <dbReference type="ChEBI" id="CHEBI:49552"/>
        <label>2</label>
    </ligand>
</feature>
<feature type="binding site">
    <location>
        <position position="720"/>
    </location>
    <ligand>
        <name>Mg(2+)</name>
        <dbReference type="ChEBI" id="CHEBI:18420"/>
    </ligand>
</feature>
<feature type="binding site">
    <location>
        <position position="724"/>
    </location>
    <ligand>
        <name>Mg(2+)</name>
        <dbReference type="ChEBI" id="CHEBI:18420"/>
    </ligand>
</feature>
<feature type="splice variant" id="VSP_059177" description="In isoform Soluble copper chaperone CopA(Z)." evidence="6">
    <original>AKPLAESSIPSEALTAVSEALPAATADDDDSQQLLLSGMSCASCVTRVQNALQSVPGVTQARVNLAERTALVMGSASPQDLVQAVEKAGYGAEAIEDDAKRRERQQETAVATMKRFRWQAIVALAVGIPVMVWGMIGDNMMVTADNRSLWLVIGLITLAVMVFAGGHFYRSAWKSLLNGAATMDTLVALGTGVAWLYSMSVNLWPQWFPMEARHLYYEASAMIIGLINLGHMLEARARQRSSKALEKLLDLTPPTARLVTDEGEKSVPLAEVQPGMLLRLTTGDRVPVDGEITQGEAWLDEAMLTGEPIPQQKGEGDSVHAGTVVQDGSVLFRASAVGSHTTLSRIIRMVRQAQSSKPEIGQLADKISAVFVPVVVVIALVSAAIWYFFGPAPQIVYTLVIATTVLIIACPCALGLATPMSIISGVGRAAEFGVLVRDADALQRASTLDTVVFDKTGTLTEGKPQVVAVKTFADFDEAQALRLAAALEQGSSHPLARAILDKASDMQLPQVNGFRTLRGLGVSGEAEGHALLLGNQALLNDQQVDTKAIEADISAQASQGATPVLLAVDGKAVALLAVRDPLRSDSVAALQRLHKAGYRLVMLTGDNPTTANAIAKEAGIDEVIAGVLPDGKAEAIKRLQSEGRQVAMVGDGINDAPALAQADVGIAMGGGSDVAIETAAITLMRHSLMGVADALAISRATLRNMKQNLLGAFIYNSIGIPVAAGILWPFTGTLLNPVVAGAAMALSSITVVSNANRLLRFKPKE</original>
    <variation>G</variation>
    <location>
        <begin position="70"/>
        <end position="834"/>
    </location>
</feature>
<gene>
    <name type="primary">copA</name>
    <name type="ordered locus">Z0604</name>
    <name type="ordered locus">ECs0537</name>
</gene>
<dbReference type="EC" id="7.2.2.8"/>
<dbReference type="EMBL" id="AE005174">
    <property type="protein sequence ID" value="AAG54833.1"/>
    <property type="molecule type" value="Genomic_DNA"/>
</dbReference>
<dbReference type="EMBL" id="BA000007">
    <property type="protein sequence ID" value="BAB33960.1"/>
    <property type="molecule type" value="Genomic_DNA"/>
</dbReference>
<dbReference type="PIR" id="A90696">
    <property type="entry name" value="A90696"/>
</dbReference>
<dbReference type="PIR" id="E85546">
    <property type="entry name" value="E85546"/>
</dbReference>
<dbReference type="RefSeq" id="NP_308564.1">
    <property type="nucleotide sequence ID" value="NC_002695.1"/>
</dbReference>
<dbReference type="RefSeq" id="WP_000083954.1">
    <property type="nucleotide sequence ID" value="NZ_VOAI01000005.1"/>
</dbReference>
<dbReference type="SMR" id="Q8XD24"/>
<dbReference type="STRING" id="155864.Z0604"/>
<dbReference type="GeneID" id="914641"/>
<dbReference type="KEGG" id="ece:Z0604"/>
<dbReference type="KEGG" id="ecs:ECs_0537"/>
<dbReference type="PATRIC" id="fig|386585.9.peg.644"/>
<dbReference type="eggNOG" id="COG2217">
    <property type="taxonomic scope" value="Bacteria"/>
</dbReference>
<dbReference type="HOGENOM" id="CLU_001771_0_3_6"/>
<dbReference type="OMA" id="HWMLPAW"/>
<dbReference type="Proteomes" id="UP000000558">
    <property type="component" value="Chromosome"/>
</dbReference>
<dbReference type="Proteomes" id="UP000002519">
    <property type="component" value="Chromosome"/>
</dbReference>
<dbReference type="GO" id="GO:0005737">
    <property type="term" value="C:cytoplasm"/>
    <property type="evidence" value="ECO:0007669"/>
    <property type="project" value="UniProtKB-SubCell"/>
</dbReference>
<dbReference type="GO" id="GO:0005886">
    <property type="term" value="C:plasma membrane"/>
    <property type="evidence" value="ECO:0007669"/>
    <property type="project" value="UniProtKB-SubCell"/>
</dbReference>
<dbReference type="GO" id="GO:0005524">
    <property type="term" value="F:ATP binding"/>
    <property type="evidence" value="ECO:0007669"/>
    <property type="project" value="UniProtKB-KW"/>
</dbReference>
<dbReference type="GO" id="GO:0016887">
    <property type="term" value="F:ATP hydrolysis activity"/>
    <property type="evidence" value="ECO:0007669"/>
    <property type="project" value="InterPro"/>
</dbReference>
<dbReference type="GO" id="GO:0005507">
    <property type="term" value="F:copper ion binding"/>
    <property type="evidence" value="ECO:0007669"/>
    <property type="project" value="TreeGrafter"/>
</dbReference>
<dbReference type="GO" id="GO:0043682">
    <property type="term" value="F:P-type divalent copper transporter activity"/>
    <property type="evidence" value="ECO:0007669"/>
    <property type="project" value="TreeGrafter"/>
</dbReference>
<dbReference type="GO" id="GO:0140581">
    <property type="term" value="F:P-type monovalent copper transporter activity"/>
    <property type="evidence" value="ECO:0007669"/>
    <property type="project" value="UniProtKB-EC"/>
</dbReference>
<dbReference type="GO" id="GO:0055070">
    <property type="term" value="P:copper ion homeostasis"/>
    <property type="evidence" value="ECO:0007669"/>
    <property type="project" value="TreeGrafter"/>
</dbReference>
<dbReference type="GO" id="GO:0075523">
    <property type="term" value="P:viral translational frameshifting"/>
    <property type="evidence" value="ECO:0007669"/>
    <property type="project" value="UniProtKB-KW"/>
</dbReference>
<dbReference type="CDD" id="cd00371">
    <property type="entry name" value="HMA"/>
    <property type="match status" value="2"/>
</dbReference>
<dbReference type="CDD" id="cd02094">
    <property type="entry name" value="P-type_ATPase_Cu-like"/>
    <property type="match status" value="1"/>
</dbReference>
<dbReference type="FunFam" id="3.30.70.100:FF:000030">
    <property type="entry name" value="Copper-exporting P-type ATPase"/>
    <property type="match status" value="1"/>
</dbReference>
<dbReference type="FunFam" id="3.30.70.100:FF:000032">
    <property type="entry name" value="Copper-exporting P-type ATPase"/>
    <property type="match status" value="1"/>
</dbReference>
<dbReference type="FunFam" id="3.40.1110.10:FF:000036">
    <property type="entry name" value="Copper-exporting P-type ATPase"/>
    <property type="match status" value="1"/>
</dbReference>
<dbReference type="FunFam" id="2.70.150.10:FF:000020">
    <property type="entry name" value="Copper-exporting P-type ATPase A"/>
    <property type="match status" value="1"/>
</dbReference>
<dbReference type="Gene3D" id="3.30.70.100">
    <property type="match status" value="2"/>
</dbReference>
<dbReference type="Gene3D" id="3.40.1110.10">
    <property type="entry name" value="Calcium-transporting ATPase, cytoplasmic domain N"/>
    <property type="match status" value="1"/>
</dbReference>
<dbReference type="Gene3D" id="2.70.150.10">
    <property type="entry name" value="Calcium-transporting ATPase, cytoplasmic transduction domain A"/>
    <property type="match status" value="1"/>
</dbReference>
<dbReference type="Gene3D" id="3.40.50.1000">
    <property type="entry name" value="HAD superfamily/HAD-like"/>
    <property type="match status" value="1"/>
</dbReference>
<dbReference type="InterPro" id="IPR023299">
    <property type="entry name" value="ATPase_P-typ_cyto_dom_N"/>
</dbReference>
<dbReference type="InterPro" id="IPR018303">
    <property type="entry name" value="ATPase_P-typ_P_site"/>
</dbReference>
<dbReference type="InterPro" id="IPR023298">
    <property type="entry name" value="ATPase_P-typ_TM_dom_sf"/>
</dbReference>
<dbReference type="InterPro" id="IPR008250">
    <property type="entry name" value="ATPase_P-typ_transduc_dom_A_sf"/>
</dbReference>
<dbReference type="InterPro" id="IPR036412">
    <property type="entry name" value="HAD-like_sf"/>
</dbReference>
<dbReference type="InterPro" id="IPR023214">
    <property type="entry name" value="HAD_sf"/>
</dbReference>
<dbReference type="InterPro" id="IPR017969">
    <property type="entry name" value="Heavy-metal-associated_CS"/>
</dbReference>
<dbReference type="InterPro" id="IPR006121">
    <property type="entry name" value="HMA_dom"/>
</dbReference>
<dbReference type="InterPro" id="IPR036163">
    <property type="entry name" value="HMA_dom_sf"/>
</dbReference>
<dbReference type="InterPro" id="IPR027256">
    <property type="entry name" value="P-typ_ATPase_IB"/>
</dbReference>
<dbReference type="InterPro" id="IPR001757">
    <property type="entry name" value="P_typ_ATPase"/>
</dbReference>
<dbReference type="InterPro" id="IPR044492">
    <property type="entry name" value="P_typ_ATPase_HD_dom"/>
</dbReference>
<dbReference type="NCBIfam" id="TIGR01511">
    <property type="entry name" value="ATPase-IB1_Cu"/>
    <property type="match status" value="1"/>
</dbReference>
<dbReference type="NCBIfam" id="TIGR01525">
    <property type="entry name" value="ATPase-IB_hvy"/>
    <property type="match status" value="1"/>
</dbReference>
<dbReference type="NCBIfam" id="TIGR01494">
    <property type="entry name" value="ATPase_P-type"/>
    <property type="match status" value="1"/>
</dbReference>
<dbReference type="NCBIfam" id="NF007952">
    <property type="entry name" value="PRK10671.1"/>
    <property type="match status" value="1"/>
</dbReference>
<dbReference type="PANTHER" id="PTHR43520">
    <property type="entry name" value="ATP7, ISOFORM B"/>
    <property type="match status" value="1"/>
</dbReference>
<dbReference type="PANTHER" id="PTHR43520:SF6">
    <property type="entry name" value="COPPER-EXPORTING P-TYPE ATPASE"/>
    <property type="match status" value="1"/>
</dbReference>
<dbReference type="Pfam" id="PF00122">
    <property type="entry name" value="E1-E2_ATPase"/>
    <property type="match status" value="1"/>
</dbReference>
<dbReference type="Pfam" id="PF00403">
    <property type="entry name" value="HMA"/>
    <property type="match status" value="2"/>
</dbReference>
<dbReference type="Pfam" id="PF00702">
    <property type="entry name" value="Hydrolase"/>
    <property type="match status" value="1"/>
</dbReference>
<dbReference type="PRINTS" id="PR00119">
    <property type="entry name" value="CATATPASE"/>
</dbReference>
<dbReference type="PRINTS" id="PR00120">
    <property type="entry name" value="HATPASE"/>
</dbReference>
<dbReference type="SFLD" id="SFLDG00002">
    <property type="entry name" value="C1.7:_P-type_atpase_like"/>
    <property type="match status" value="1"/>
</dbReference>
<dbReference type="SFLD" id="SFLDF00027">
    <property type="entry name" value="p-type_atpase"/>
    <property type="match status" value="1"/>
</dbReference>
<dbReference type="SUPFAM" id="SSF81653">
    <property type="entry name" value="Calcium ATPase, transduction domain A"/>
    <property type="match status" value="1"/>
</dbReference>
<dbReference type="SUPFAM" id="SSF81665">
    <property type="entry name" value="Calcium ATPase, transmembrane domain M"/>
    <property type="match status" value="1"/>
</dbReference>
<dbReference type="SUPFAM" id="SSF56784">
    <property type="entry name" value="HAD-like"/>
    <property type="match status" value="1"/>
</dbReference>
<dbReference type="SUPFAM" id="SSF55008">
    <property type="entry name" value="HMA, heavy metal-associated domain"/>
    <property type="match status" value="2"/>
</dbReference>
<dbReference type="PROSITE" id="PS00154">
    <property type="entry name" value="ATPASE_E1_E2"/>
    <property type="match status" value="1"/>
</dbReference>
<dbReference type="PROSITE" id="PS01047">
    <property type="entry name" value="HMA_1"/>
    <property type="match status" value="1"/>
</dbReference>
<dbReference type="PROSITE" id="PS50846">
    <property type="entry name" value="HMA_2"/>
    <property type="match status" value="2"/>
</dbReference>
<keyword id="KW-0067">ATP-binding</keyword>
<keyword id="KW-0997">Cell inner membrane</keyword>
<keyword id="KW-1003">Cell membrane</keyword>
<keyword id="KW-0186">Copper</keyword>
<keyword id="KW-0187">Copper transport</keyword>
<keyword id="KW-0963">Cytoplasm</keyword>
<keyword id="KW-0406">Ion transport</keyword>
<keyword id="KW-0460">Magnesium</keyword>
<keyword id="KW-0472">Membrane</keyword>
<keyword id="KW-0479">Metal-binding</keyword>
<keyword id="KW-0547">Nucleotide-binding</keyword>
<keyword id="KW-0597">Phosphoprotein</keyword>
<keyword id="KW-1185">Reference proteome</keyword>
<keyword id="KW-0677">Repeat</keyword>
<keyword id="KW-0688">Ribosomal frameshifting</keyword>
<keyword id="KW-1278">Translocase</keyword>
<keyword id="KW-0812">Transmembrane</keyword>
<keyword id="KW-1133">Transmembrane helix</keyword>
<keyword id="KW-0813">Transport</keyword>
<evidence type="ECO:0000250" key="1"/>
<evidence type="ECO:0000250" key="2">
    <source>
        <dbReference type="UniProtKB" id="Q59385"/>
    </source>
</evidence>
<evidence type="ECO:0000255" key="3"/>
<evidence type="ECO:0000255" key="4">
    <source>
        <dbReference type="PROSITE-ProRule" id="PRU00280"/>
    </source>
</evidence>
<evidence type="ECO:0000305" key="5"/>
<evidence type="ECO:0000305" key="6">
    <source>
    </source>
</evidence>
<proteinExistence type="inferred from homology"/>